<feature type="signal peptide" evidence="2">
    <location>
        <begin position="1" status="less than"/>
        <end position="1"/>
    </location>
</feature>
<feature type="chain" id="PRO_0000032249" description="Albumin-1 chain b" evidence="1">
    <location>
        <begin position="2"/>
        <end position="38"/>
    </location>
</feature>
<feature type="propeptide" id="PRO_0000032250" evidence="2">
    <location>
        <begin position="39"/>
        <end position="46"/>
    </location>
</feature>
<feature type="chain" id="PRO_0000032251" description="Albumin-1 chain a" evidence="2">
    <location>
        <begin position="47"/>
        <end position="89" status="greater than"/>
    </location>
</feature>
<feature type="disulfide bond" evidence="1">
    <location>
        <begin position="4"/>
        <end position="21"/>
    </location>
</feature>
<feature type="disulfide bond" evidence="1">
    <location>
        <begin position="8"/>
        <end position="23"/>
    </location>
</feature>
<feature type="disulfide bond" evidence="1">
    <location>
        <begin position="16"/>
        <end position="33"/>
    </location>
</feature>
<feature type="non-terminal residue">
    <location>
        <position position="1"/>
    </location>
</feature>
<feature type="non-terminal residue">
    <location>
        <position position="89"/>
    </location>
</feature>
<sequence>AADCNGACSPFEMPPCRSTDCRCIPIALFGGFCINPTGLSSVAKMIDEHPNLCQSDDECLKKGSGNFCARYPNHYMDYGWCFDSDSEAL</sequence>
<proteinExistence type="inferred from homology"/>
<gene>
    <name type="primary">LEG</name>
</gene>
<name>ALB1_VIGRR</name>
<comment type="function">
    <text evidence="1">A1b binds to basic 7S globulin (BG) and stimulates its phosphorylation activity.</text>
</comment>
<comment type="domain">
    <text evidence="1">The presence of a 'disulfide through disulfide knot' structurally defines this protein as a knottin.</text>
</comment>
<comment type="PTM">
    <text>The C-terminal glycine may be removed from A1b.</text>
</comment>
<accession>Q9FRT8</accession>
<protein>
    <recommendedName>
        <fullName>Albumin-1</fullName>
        <shortName>A1</shortName>
    </recommendedName>
    <component>
        <recommendedName>
            <fullName>Albumin-1 chain b</fullName>
            <shortName>A1b</shortName>
        </recommendedName>
        <alternativeName>
            <fullName>Leginsulin</fullName>
        </alternativeName>
    </component>
    <component>
        <recommendedName>
            <fullName>Albumin-1 chain a</fullName>
            <shortName>A1a</shortName>
        </recommendedName>
    </component>
</protein>
<evidence type="ECO:0000250" key="1"/>
<evidence type="ECO:0000255" key="2"/>
<reference key="1">
    <citation type="journal article" date="2003" name="Eur. J. Biochem.">
        <title>A possible physiological function and the tertiary structure of a 4-kDa peptide in legumes.</title>
        <authorList>
            <person name="Yamazaki T."/>
            <person name="Takaoka M."/>
            <person name="Katoh E."/>
            <person name="Hanada K."/>
            <person name="Sakita M."/>
            <person name="Sakata K."/>
            <person name="Nishiuchi Y."/>
            <person name="Hirano H."/>
        </authorList>
    </citation>
    <scope>NUCLEOTIDE SEQUENCE [GENOMIC DNA]</scope>
    <source>
        <strain>cv. Blackmappe</strain>
        <tissue>Leaf</tissue>
    </source>
</reference>
<keyword id="KW-1015">Disulfide bond</keyword>
<keyword id="KW-0960">Knottin</keyword>
<keyword id="KW-1185">Reference proteome</keyword>
<keyword id="KW-0708">Seed storage protein</keyword>
<keyword id="KW-0732">Signal</keyword>
<keyword id="KW-0758">Storage protein</keyword>
<keyword id="KW-0800">Toxin</keyword>
<organism>
    <name type="scientific">Vigna radiata var. radiata</name>
    <name type="common">Mung bean</name>
    <name type="synonym">Phaseolus aureus</name>
    <dbReference type="NCBI Taxonomy" id="3916"/>
    <lineage>
        <taxon>Eukaryota</taxon>
        <taxon>Viridiplantae</taxon>
        <taxon>Streptophyta</taxon>
        <taxon>Embryophyta</taxon>
        <taxon>Tracheophyta</taxon>
        <taxon>Spermatophyta</taxon>
        <taxon>Magnoliopsida</taxon>
        <taxon>eudicotyledons</taxon>
        <taxon>Gunneridae</taxon>
        <taxon>Pentapetalae</taxon>
        <taxon>rosids</taxon>
        <taxon>fabids</taxon>
        <taxon>Fabales</taxon>
        <taxon>Fabaceae</taxon>
        <taxon>Papilionoideae</taxon>
        <taxon>50 kb inversion clade</taxon>
        <taxon>NPAAA clade</taxon>
        <taxon>indigoferoid/millettioid clade</taxon>
        <taxon>Phaseoleae</taxon>
        <taxon>Vigna</taxon>
    </lineage>
</organism>
<dbReference type="EMBL" id="AB052881">
    <property type="protein sequence ID" value="BAB19938.1"/>
    <property type="molecule type" value="Genomic_DNA"/>
</dbReference>
<dbReference type="SMR" id="Q9FRT8"/>
<dbReference type="STRING" id="3916.Q9FRT8"/>
<dbReference type="Proteomes" id="UP000087766">
    <property type="component" value="Unplaced"/>
</dbReference>
<dbReference type="GO" id="GO:0045735">
    <property type="term" value="F:nutrient reservoir activity"/>
    <property type="evidence" value="ECO:0007669"/>
    <property type="project" value="UniProtKB-KW"/>
</dbReference>
<dbReference type="GO" id="GO:0090729">
    <property type="term" value="F:toxin activity"/>
    <property type="evidence" value="ECO:0007669"/>
    <property type="project" value="UniProtKB-KW"/>
</dbReference>
<dbReference type="InterPro" id="IPR012512">
    <property type="entry name" value="Albumin_I"/>
</dbReference>
<dbReference type="InterPro" id="IPR032000">
    <property type="entry name" value="Albumin_I_a"/>
</dbReference>
<dbReference type="Pfam" id="PF08027">
    <property type="entry name" value="Albumin_I"/>
    <property type="match status" value="1"/>
</dbReference>
<dbReference type="Pfam" id="PF16720">
    <property type="entry name" value="Albumin_I_a"/>
    <property type="match status" value="1"/>
</dbReference>
<dbReference type="SUPFAM" id="SSF57059">
    <property type="entry name" value="omega toxin-like"/>
    <property type="match status" value="1"/>
</dbReference>